<feature type="initiator methionine" description="Removed" evidence="1">
    <location>
        <position position="1"/>
    </location>
</feature>
<feature type="chain" id="PRO_0000164090" description="Superoxide dismutase [Cu-Zn]">
    <location>
        <begin position="2"/>
        <end position="153"/>
    </location>
</feature>
<feature type="binding site" evidence="1">
    <location>
        <position position="45"/>
    </location>
    <ligand>
        <name>Cu cation</name>
        <dbReference type="ChEBI" id="CHEBI:23378"/>
        <note>catalytic</note>
    </ligand>
</feature>
<feature type="binding site" evidence="1">
    <location>
        <position position="47"/>
    </location>
    <ligand>
        <name>Cu cation</name>
        <dbReference type="ChEBI" id="CHEBI:23378"/>
        <note>catalytic</note>
    </ligand>
</feature>
<feature type="binding site" evidence="1">
    <location>
        <position position="62"/>
    </location>
    <ligand>
        <name>Cu cation</name>
        <dbReference type="ChEBI" id="CHEBI:23378"/>
        <note>catalytic</note>
    </ligand>
</feature>
<feature type="binding site" evidence="1">
    <location>
        <position position="62"/>
    </location>
    <ligand>
        <name>Zn(2+)</name>
        <dbReference type="ChEBI" id="CHEBI:29105"/>
        <note>structural</note>
    </ligand>
</feature>
<feature type="binding site" evidence="1">
    <location>
        <position position="70"/>
    </location>
    <ligand>
        <name>Zn(2+)</name>
        <dbReference type="ChEBI" id="CHEBI:29105"/>
        <note>structural</note>
    </ligand>
</feature>
<feature type="binding site" evidence="1">
    <location>
        <position position="79"/>
    </location>
    <ligand>
        <name>Zn(2+)</name>
        <dbReference type="ChEBI" id="CHEBI:29105"/>
        <note>structural</note>
    </ligand>
</feature>
<feature type="binding site" evidence="1">
    <location>
        <position position="82"/>
    </location>
    <ligand>
        <name>Zn(2+)</name>
        <dbReference type="ChEBI" id="CHEBI:29105"/>
        <note>structural</note>
    </ligand>
</feature>
<feature type="binding site" evidence="1">
    <location>
        <position position="119"/>
    </location>
    <ligand>
        <name>Cu cation</name>
        <dbReference type="ChEBI" id="CHEBI:23378"/>
        <note>catalytic</note>
    </ligand>
</feature>
<feature type="disulfide bond" evidence="1">
    <location>
        <begin position="56"/>
        <end position="145"/>
    </location>
</feature>
<name>SODC_DROOR</name>
<protein>
    <recommendedName>
        <fullName evidence="2">Superoxide dismutase [Cu-Zn]</fullName>
        <ecNumber>1.15.1.1</ecNumber>
    </recommendedName>
    <alternativeName>
        <fullName evidence="2">Superoxide dismutase 1</fullName>
    </alternativeName>
</protein>
<organism>
    <name type="scientific">Drosophila orena</name>
    <name type="common">Fruit fly</name>
    <dbReference type="NCBI Taxonomy" id="7233"/>
    <lineage>
        <taxon>Eukaryota</taxon>
        <taxon>Metazoa</taxon>
        <taxon>Ecdysozoa</taxon>
        <taxon>Arthropoda</taxon>
        <taxon>Hexapoda</taxon>
        <taxon>Insecta</taxon>
        <taxon>Pterygota</taxon>
        <taxon>Neoptera</taxon>
        <taxon>Endopterygota</taxon>
        <taxon>Diptera</taxon>
        <taxon>Brachycera</taxon>
        <taxon>Muscomorpha</taxon>
        <taxon>Ephydroidea</taxon>
        <taxon>Drosophilidae</taxon>
        <taxon>Drosophila</taxon>
        <taxon>Sophophora</taxon>
    </lineage>
</organism>
<comment type="function">
    <text>Destroys radicals which are normally produced within the cells and which are toxic to biological systems.</text>
</comment>
<comment type="catalytic activity">
    <reaction>
        <text>2 superoxide + 2 H(+) = H2O2 + O2</text>
        <dbReference type="Rhea" id="RHEA:20696"/>
        <dbReference type="ChEBI" id="CHEBI:15378"/>
        <dbReference type="ChEBI" id="CHEBI:15379"/>
        <dbReference type="ChEBI" id="CHEBI:16240"/>
        <dbReference type="ChEBI" id="CHEBI:18421"/>
        <dbReference type="EC" id="1.15.1.1"/>
    </reaction>
</comment>
<comment type="cofactor">
    <cofactor evidence="1">
        <name>Cu cation</name>
        <dbReference type="ChEBI" id="CHEBI:23378"/>
    </cofactor>
    <text evidence="1">Binds 1 copper ion per subunit.</text>
</comment>
<comment type="cofactor">
    <cofactor evidence="1">
        <name>Zn(2+)</name>
        <dbReference type="ChEBI" id="CHEBI:29105"/>
    </cofactor>
    <text evidence="1">Binds 1 zinc ion per subunit.</text>
</comment>
<comment type="subunit">
    <text evidence="1">Homodimer.</text>
</comment>
<comment type="subcellular location">
    <subcellularLocation>
        <location evidence="1">Cytoplasm</location>
    </subcellularLocation>
</comment>
<comment type="similarity">
    <text evidence="3">Belongs to the Cu-Zn superoxide dismutase family.</text>
</comment>
<dbReference type="EC" id="1.15.1.1"/>
<dbReference type="EMBL" id="AF127155">
    <property type="protein sequence ID" value="AAF23594.1"/>
    <property type="molecule type" value="Genomic_DNA"/>
</dbReference>
<dbReference type="SMR" id="Q9U4X5"/>
<dbReference type="GO" id="GO:0005737">
    <property type="term" value="C:cytoplasm"/>
    <property type="evidence" value="ECO:0007669"/>
    <property type="project" value="UniProtKB-SubCell"/>
</dbReference>
<dbReference type="GO" id="GO:0005507">
    <property type="term" value="F:copper ion binding"/>
    <property type="evidence" value="ECO:0007669"/>
    <property type="project" value="InterPro"/>
</dbReference>
<dbReference type="GO" id="GO:0004784">
    <property type="term" value="F:superoxide dismutase activity"/>
    <property type="evidence" value="ECO:0007669"/>
    <property type="project" value="UniProtKB-EC"/>
</dbReference>
<dbReference type="CDD" id="cd00305">
    <property type="entry name" value="Cu-Zn_Superoxide_Dismutase"/>
    <property type="match status" value="1"/>
</dbReference>
<dbReference type="FunFam" id="2.60.40.200:FF:000001">
    <property type="entry name" value="Superoxide dismutase [Cu-Zn]"/>
    <property type="match status" value="1"/>
</dbReference>
<dbReference type="Gene3D" id="2.60.40.200">
    <property type="entry name" value="Superoxide dismutase, copper/zinc binding domain"/>
    <property type="match status" value="1"/>
</dbReference>
<dbReference type="InterPro" id="IPR036423">
    <property type="entry name" value="SOD-like_Cu/Zn_dom_sf"/>
</dbReference>
<dbReference type="InterPro" id="IPR024134">
    <property type="entry name" value="SOD_Cu/Zn_/chaperone"/>
</dbReference>
<dbReference type="InterPro" id="IPR018152">
    <property type="entry name" value="SOD_Cu/Zn_BS"/>
</dbReference>
<dbReference type="InterPro" id="IPR001424">
    <property type="entry name" value="SOD_Cu_Zn_dom"/>
</dbReference>
<dbReference type="PANTHER" id="PTHR10003">
    <property type="entry name" value="SUPEROXIDE DISMUTASE CU-ZN -RELATED"/>
    <property type="match status" value="1"/>
</dbReference>
<dbReference type="Pfam" id="PF00080">
    <property type="entry name" value="Sod_Cu"/>
    <property type="match status" value="1"/>
</dbReference>
<dbReference type="PRINTS" id="PR00068">
    <property type="entry name" value="CUZNDISMTASE"/>
</dbReference>
<dbReference type="SUPFAM" id="SSF49329">
    <property type="entry name" value="Cu,Zn superoxide dismutase-like"/>
    <property type="match status" value="1"/>
</dbReference>
<dbReference type="PROSITE" id="PS00087">
    <property type="entry name" value="SOD_CU_ZN_1"/>
    <property type="match status" value="1"/>
</dbReference>
<dbReference type="PROSITE" id="PS00332">
    <property type="entry name" value="SOD_CU_ZN_2"/>
    <property type="match status" value="1"/>
</dbReference>
<accession>Q9U4X5</accession>
<gene>
    <name evidence="2" type="primary">Sod1</name>
    <name evidence="2" type="synonym">Sod</name>
</gene>
<proteinExistence type="inferred from homology"/>
<sequence length="153" mass="15772">MVVKAVCVINGDAKGTVFFEQESSETPVKVSGEVCGLAKGLHGFHVHEFGDNTNGCMSSGPHFNPYGKEHGAPVDENRHLGDLGNIEATGDCPTKVSITDSRITLFGADSIIGRTVVVHADADDLGKGGHELSKSTGNAGARIGCGVIGIAKV</sequence>
<evidence type="ECO:0000250" key="1"/>
<evidence type="ECO:0000250" key="2">
    <source>
        <dbReference type="UniProtKB" id="P61851"/>
    </source>
</evidence>
<evidence type="ECO:0000305" key="3"/>
<keyword id="KW-0049">Antioxidant</keyword>
<keyword id="KW-0186">Copper</keyword>
<keyword id="KW-0963">Cytoplasm</keyword>
<keyword id="KW-1015">Disulfide bond</keyword>
<keyword id="KW-0479">Metal-binding</keyword>
<keyword id="KW-0560">Oxidoreductase</keyword>
<keyword id="KW-0862">Zinc</keyword>
<reference key="1">
    <citation type="submission" date="1999-02" db="EMBL/GenBank/DDBJ databases">
        <title>Phylogenetic analysis of Drosophila melanogaster group based on Cu-Zn superoxide dismutase gene sequences.</title>
        <authorList>
            <person name="Arxontaki K."/>
            <person name="Kastanis P."/>
            <person name="Tsakas S."/>
            <person name="Loukas M."/>
            <person name="Eliopoulos E."/>
        </authorList>
    </citation>
    <scope>NUCLEOTIDE SEQUENCE [GENOMIC DNA]</scope>
</reference>